<protein>
    <recommendedName>
        <fullName evidence="1">Small ribosomal subunit protein uS13</fullName>
    </recommendedName>
    <alternativeName>
        <fullName evidence="3">30S ribosomal protein S13</fullName>
    </alternativeName>
</protein>
<reference key="1">
    <citation type="journal article" date="2003" name="Science">
        <title>Role of mobile DNA in the evolution of vancomycin-resistant Enterococcus faecalis.</title>
        <authorList>
            <person name="Paulsen I.T."/>
            <person name="Banerjei L."/>
            <person name="Myers G.S.A."/>
            <person name="Nelson K.E."/>
            <person name="Seshadri R."/>
            <person name="Read T.D."/>
            <person name="Fouts D.E."/>
            <person name="Eisen J.A."/>
            <person name="Gill S.R."/>
            <person name="Heidelberg J.F."/>
            <person name="Tettelin H."/>
            <person name="Dodson R.J."/>
            <person name="Umayam L.A."/>
            <person name="Brinkac L.M."/>
            <person name="Beanan M.J."/>
            <person name="Daugherty S.C."/>
            <person name="DeBoy R.T."/>
            <person name="Durkin S.A."/>
            <person name="Kolonay J.F."/>
            <person name="Madupu R."/>
            <person name="Nelson W.C."/>
            <person name="Vamathevan J.J."/>
            <person name="Tran B."/>
            <person name="Upton J."/>
            <person name="Hansen T."/>
            <person name="Shetty J."/>
            <person name="Khouri H.M."/>
            <person name="Utterback T.R."/>
            <person name="Radune D."/>
            <person name="Ketchum K.A."/>
            <person name="Dougherty B.A."/>
            <person name="Fraser C.M."/>
        </authorList>
    </citation>
    <scope>NUCLEOTIDE SEQUENCE [LARGE SCALE GENOMIC DNA]</scope>
    <source>
        <strain>ATCC 700802 / V583</strain>
    </source>
</reference>
<sequence length="121" mass="13567">MARIAGVDIPRDKRVVVSLTYIYGIGNTTAKKVLANVGVSEDVRVRDLTNEQTDAIRAEIDKLKVEGDLRREVNLNIKRLMEIGSYRGIRHRRGLPTRGQNTKNNARTRKGPTKTVAGKKK</sequence>
<keyword id="KW-0002">3D-structure</keyword>
<keyword id="KW-1185">Reference proteome</keyword>
<keyword id="KW-0687">Ribonucleoprotein</keyword>
<keyword id="KW-0689">Ribosomal protein</keyword>
<keyword id="KW-0694">RNA-binding</keyword>
<keyword id="KW-0699">rRNA-binding</keyword>
<keyword id="KW-0820">tRNA-binding</keyword>
<organism>
    <name type="scientific">Enterococcus faecalis (strain ATCC 700802 / V583)</name>
    <dbReference type="NCBI Taxonomy" id="226185"/>
    <lineage>
        <taxon>Bacteria</taxon>
        <taxon>Bacillati</taxon>
        <taxon>Bacillota</taxon>
        <taxon>Bacilli</taxon>
        <taxon>Lactobacillales</taxon>
        <taxon>Enterococcaceae</taxon>
        <taxon>Enterococcus</taxon>
    </lineage>
</organism>
<dbReference type="EMBL" id="AE016830">
    <property type="protein sequence ID" value="AAO80099.1"/>
    <property type="molecule type" value="Genomic_DNA"/>
</dbReference>
<dbReference type="RefSeq" id="NP_814028.1">
    <property type="nucleotide sequence ID" value="NC_004668.1"/>
</dbReference>
<dbReference type="RefSeq" id="WP_002356225.1">
    <property type="nucleotide sequence ID" value="NZ_KE136524.1"/>
</dbReference>
<dbReference type="PDB" id="6WUA">
    <property type="method" value="EM"/>
    <property type="resolution" value="3.20 A"/>
    <property type="chains" value="m=2-113"/>
</dbReference>
<dbReference type="PDB" id="7P7Q">
    <property type="method" value="EM"/>
    <property type="resolution" value="2.40 A"/>
    <property type="chains" value="n=1-121"/>
</dbReference>
<dbReference type="PDB" id="7P7R">
    <property type="method" value="EM"/>
    <property type="resolution" value="2.90 A"/>
    <property type="chains" value="n=1-121"/>
</dbReference>
<dbReference type="PDBsum" id="6WUA"/>
<dbReference type="PDBsum" id="7P7Q"/>
<dbReference type="PDBsum" id="7P7R"/>
<dbReference type="EMDB" id="EMD-13241"/>
<dbReference type="EMDB" id="EMD-13242"/>
<dbReference type="SMR" id="P59754"/>
<dbReference type="STRING" id="226185.EF_0231"/>
<dbReference type="EnsemblBacteria" id="AAO80099">
    <property type="protein sequence ID" value="AAO80099"/>
    <property type="gene ID" value="EF_0231"/>
</dbReference>
<dbReference type="GeneID" id="60892725"/>
<dbReference type="KEGG" id="efa:EF0231"/>
<dbReference type="PATRIC" id="fig|226185.45.peg.36"/>
<dbReference type="eggNOG" id="COG0099">
    <property type="taxonomic scope" value="Bacteria"/>
</dbReference>
<dbReference type="HOGENOM" id="CLU_103849_1_1_9"/>
<dbReference type="Proteomes" id="UP000001415">
    <property type="component" value="Chromosome"/>
</dbReference>
<dbReference type="GO" id="GO:0005829">
    <property type="term" value="C:cytosol"/>
    <property type="evidence" value="ECO:0007669"/>
    <property type="project" value="TreeGrafter"/>
</dbReference>
<dbReference type="GO" id="GO:0015935">
    <property type="term" value="C:small ribosomal subunit"/>
    <property type="evidence" value="ECO:0007669"/>
    <property type="project" value="TreeGrafter"/>
</dbReference>
<dbReference type="GO" id="GO:0019843">
    <property type="term" value="F:rRNA binding"/>
    <property type="evidence" value="ECO:0007669"/>
    <property type="project" value="UniProtKB-UniRule"/>
</dbReference>
<dbReference type="GO" id="GO:0003735">
    <property type="term" value="F:structural constituent of ribosome"/>
    <property type="evidence" value="ECO:0007669"/>
    <property type="project" value="InterPro"/>
</dbReference>
<dbReference type="GO" id="GO:0000049">
    <property type="term" value="F:tRNA binding"/>
    <property type="evidence" value="ECO:0007669"/>
    <property type="project" value="UniProtKB-UniRule"/>
</dbReference>
<dbReference type="GO" id="GO:0006412">
    <property type="term" value="P:translation"/>
    <property type="evidence" value="ECO:0007669"/>
    <property type="project" value="UniProtKB-UniRule"/>
</dbReference>
<dbReference type="FunFam" id="1.10.8.50:FF:000001">
    <property type="entry name" value="30S ribosomal protein S13"/>
    <property type="match status" value="1"/>
</dbReference>
<dbReference type="FunFam" id="4.10.910.10:FF:000001">
    <property type="entry name" value="30S ribosomal protein S13"/>
    <property type="match status" value="1"/>
</dbReference>
<dbReference type="Gene3D" id="1.10.8.50">
    <property type="match status" value="1"/>
</dbReference>
<dbReference type="Gene3D" id="4.10.910.10">
    <property type="entry name" value="30s ribosomal protein s13, domain 2"/>
    <property type="match status" value="1"/>
</dbReference>
<dbReference type="HAMAP" id="MF_01315">
    <property type="entry name" value="Ribosomal_uS13"/>
    <property type="match status" value="1"/>
</dbReference>
<dbReference type="InterPro" id="IPR027437">
    <property type="entry name" value="Rbsml_uS13_C"/>
</dbReference>
<dbReference type="InterPro" id="IPR001892">
    <property type="entry name" value="Ribosomal_uS13"/>
</dbReference>
<dbReference type="InterPro" id="IPR010979">
    <property type="entry name" value="Ribosomal_uS13-like_H2TH"/>
</dbReference>
<dbReference type="InterPro" id="IPR019980">
    <property type="entry name" value="Ribosomal_uS13_bac-type"/>
</dbReference>
<dbReference type="InterPro" id="IPR018269">
    <property type="entry name" value="Ribosomal_uS13_CS"/>
</dbReference>
<dbReference type="NCBIfam" id="TIGR03631">
    <property type="entry name" value="uS13_bact"/>
    <property type="match status" value="1"/>
</dbReference>
<dbReference type="PANTHER" id="PTHR10871">
    <property type="entry name" value="30S RIBOSOMAL PROTEIN S13/40S RIBOSOMAL PROTEIN S18"/>
    <property type="match status" value="1"/>
</dbReference>
<dbReference type="PANTHER" id="PTHR10871:SF1">
    <property type="entry name" value="SMALL RIBOSOMAL SUBUNIT PROTEIN US13M"/>
    <property type="match status" value="1"/>
</dbReference>
<dbReference type="Pfam" id="PF00416">
    <property type="entry name" value="Ribosomal_S13"/>
    <property type="match status" value="1"/>
</dbReference>
<dbReference type="PIRSF" id="PIRSF002134">
    <property type="entry name" value="Ribosomal_S13"/>
    <property type="match status" value="1"/>
</dbReference>
<dbReference type="SUPFAM" id="SSF46946">
    <property type="entry name" value="S13-like H2TH domain"/>
    <property type="match status" value="1"/>
</dbReference>
<dbReference type="PROSITE" id="PS00646">
    <property type="entry name" value="RIBOSOMAL_S13_1"/>
    <property type="match status" value="1"/>
</dbReference>
<dbReference type="PROSITE" id="PS50159">
    <property type="entry name" value="RIBOSOMAL_S13_2"/>
    <property type="match status" value="1"/>
</dbReference>
<accession>P59754</accession>
<evidence type="ECO:0000255" key="1">
    <source>
        <dbReference type="HAMAP-Rule" id="MF_01315"/>
    </source>
</evidence>
<evidence type="ECO:0000256" key="2">
    <source>
        <dbReference type="SAM" id="MobiDB-lite"/>
    </source>
</evidence>
<evidence type="ECO:0000305" key="3"/>
<evidence type="ECO:0007829" key="4">
    <source>
        <dbReference type="PDB" id="6WUA"/>
    </source>
</evidence>
<feature type="chain" id="PRO_0000132092" description="Small ribosomal subunit protein uS13">
    <location>
        <begin position="1"/>
        <end position="121"/>
    </location>
</feature>
<feature type="region of interest" description="Disordered" evidence="2">
    <location>
        <begin position="90"/>
        <end position="121"/>
    </location>
</feature>
<feature type="compositionally biased region" description="Basic residues" evidence="2">
    <location>
        <begin position="106"/>
        <end position="121"/>
    </location>
</feature>
<feature type="strand" evidence="4">
    <location>
        <begin position="4"/>
        <end position="7"/>
    </location>
</feature>
<feature type="strand" evidence="4">
    <location>
        <begin position="11"/>
        <end position="13"/>
    </location>
</feature>
<feature type="helix" evidence="4">
    <location>
        <begin position="15"/>
        <end position="18"/>
    </location>
</feature>
<feature type="helix" evidence="4">
    <location>
        <begin position="19"/>
        <end position="21"/>
    </location>
</feature>
<feature type="helix" evidence="4">
    <location>
        <begin position="28"/>
        <end position="37"/>
    </location>
</feature>
<feature type="strand" evidence="4">
    <location>
        <begin position="43"/>
        <end position="45"/>
    </location>
</feature>
<feature type="helix" evidence="4">
    <location>
        <begin position="50"/>
        <end position="58"/>
    </location>
</feature>
<feature type="helix" evidence="4">
    <location>
        <begin position="60"/>
        <end position="62"/>
    </location>
</feature>
<feature type="helix" evidence="4">
    <location>
        <begin position="69"/>
        <end position="80"/>
    </location>
</feature>
<feature type="turn" evidence="4">
    <location>
        <begin position="81"/>
        <end position="83"/>
    </location>
</feature>
<feature type="helix" evidence="4">
    <location>
        <begin position="86"/>
        <end position="91"/>
    </location>
</feature>
<feature type="turn" evidence="4">
    <location>
        <begin position="92"/>
        <end position="94"/>
    </location>
</feature>
<feature type="strand" evidence="4">
    <location>
        <begin position="102"/>
        <end position="104"/>
    </location>
</feature>
<feature type="helix" evidence="4">
    <location>
        <begin position="107"/>
        <end position="110"/>
    </location>
</feature>
<gene>
    <name evidence="1" type="primary">rpsM</name>
    <name type="ordered locus">EF_0231</name>
</gene>
<comment type="function">
    <text evidence="1">Located at the top of the head of the 30S subunit, it contacts several helices of the 16S rRNA. In the 70S ribosome it contacts the 23S rRNA (bridge B1a) and protein L5 of the 50S subunit (bridge B1b), connecting the 2 subunits; these bridges are implicated in subunit movement. Contacts the tRNAs in the A and P-sites.</text>
</comment>
<comment type="subunit">
    <text evidence="1">Part of the 30S ribosomal subunit. Forms a loose heterodimer with protein S19. Forms two bridges to the 50S subunit in the 70S ribosome.</text>
</comment>
<comment type="similarity">
    <text evidence="1">Belongs to the universal ribosomal protein uS13 family.</text>
</comment>
<proteinExistence type="evidence at protein level"/>
<name>RS13_ENTFA</name>